<feature type="chain" id="PRO_0000211710" description="DNA gyrase inhibitor YacG">
    <location>
        <begin position="1"/>
        <end position="69"/>
    </location>
</feature>
<feature type="binding site" evidence="1">
    <location>
        <position position="13"/>
    </location>
    <ligand>
        <name>Zn(2+)</name>
        <dbReference type="ChEBI" id="CHEBI:29105"/>
    </ligand>
</feature>
<feature type="binding site" evidence="1">
    <location>
        <position position="16"/>
    </location>
    <ligand>
        <name>Zn(2+)</name>
        <dbReference type="ChEBI" id="CHEBI:29105"/>
    </ligand>
</feature>
<feature type="binding site" evidence="1">
    <location>
        <position position="32"/>
    </location>
    <ligand>
        <name>Zn(2+)</name>
        <dbReference type="ChEBI" id="CHEBI:29105"/>
    </ligand>
</feature>
<feature type="binding site" evidence="1">
    <location>
        <position position="36"/>
    </location>
    <ligand>
        <name>Zn(2+)</name>
        <dbReference type="ChEBI" id="CHEBI:29105"/>
    </ligand>
</feature>
<name>YACG_NEIMA</name>
<organism>
    <name type="scientific">Neisseria meningitidis serogroup A / serotype 4A (strain DSM 15465 / Z2491)</name>
    <dbReference type="NCBI Taxonomy" id="122587"/>
    <lineage>
        <taxon>Bacteria</taxon>
        <taxon>Pseudomonadati</taxon>
        <taxon>Pseudomonadota</taxon>
        <taxon>Betaproteobacteria</taxon>
        <taxon>Neisseriales</taxon>
        <taxon>Neisseriaceae</taxon>
        <taxon>Neisseria</taxon>
    </lineage>
</organism>
<comment type="function">
    <text evidence="1">Inhibits all the catalytic activities of DNA gyrase by preventing its interaction with DNA. Acts by binding directly to the C-terminal domain of GyrB, which probably disrupts DNA binding by the gyrase.</text>
</comment>
<comment type="cofactor">
    <cofactor evidence="1">
        <name>Zn(2+)</name>
        <dbReference type="ChEBI" id="CHEBI:29105"/>
    </cofactor>
    <text evidence="1">Binds 1 zinc ion.</text>
</comment>
<comment type="subunit">
    <text evidence="1">Interacts with GyrB.</text>
</comment>
<comment type="similarity">
    <text evidence="1">Belongs to the DNA gyrase inhibitor YacG family.</text>
</comment>
<dbReference type="EMBL" id="AL157959">
    <property type="protein sequence ID" value="CAM09254.1"/>
    <property type="molecule type" value="Genomic_DNA"/>
</dbReference>
<dbReference type="PIR" id="C81788">
    <property type="entry name" value="C81788"/>
</dbReference>
<dbReference type="RefSeq" id="WP_002212333.1">
    <property type="nucleotide sequence ID" value="NC_003116.1"/>
</dbReference>
<dbReference type="SMR" id="Q9JSS3"/>
<dbReference type="EnsemblBacteria" id="CAM09254">
    <property type="protein sequence ID" value="CAM09254"/>
    <property type="gene ID" value="NMA2158"/>
</dbReference>
<dbReference type="KEGG" id="nma:NMA2158"/>
<dbReference type="HOGENOM" id="CLU_178280_3_2_4"/>
<dbReference type="Proteomes" id="UP000000626">
    <property type="component" value="Chromosome"/>
</dbReference>
<dbReference type="GO" id="GO:0008657">
    <property type="term" value="F:DNA topoisomerase type II (double strand cut, ATP-hydrolyzing) inhibitor activity"/>
    <property type="evidence" value="ECO:0007669"/>
    <property type="project" value="UniProtKB-UniRule"/>
</dbReference>
<dbReference type="GO" id="GO:0008270">
    <property type="term" value="F:zinc ion binding"/>
    <property type="evidence" value="ECO:0007669"/>
    <property type="project" value="UniProtKB-UniRule"/>
</dbReference>
<dbReference type="GO" id="GO:0006355">
    <property type="term" value="P:regulation of DNA-templated transcription"/>
    <property type="evidence" value="ECO:0007669"/>
    <property type="project" value="InterPro"/>
</dbReference>
<dbReference type="Gene3D" id="3.30.50.10">
    <property type="entry name" value="Erythroid Transcription Factor GATA-1, subunit A"/>
    <property type="match status" value="1"/>
</dbReference>
<dbReference type="HAMAP" id="MF_00649">
    <property type="entry name" value="DNA_gyrase_inhibitor_YacG"/>
    <property type="match status" value="1"/>
</dbReference>
<dbReference type="InterPro" id="IPR005584">
    <property type="entry name" value="DNA_gyrase_inhibitor_YacG"/>
</dbReference>
<dbReference type="InterPro" id="IPR013088">
    <property type="entry name" value="Znf_NHR/GATA"/>
</dbReference>
<dbReference type="PANTHER" id="PTHR36150">
    <property type="entry name" value="DNA GYRASE INHIBITOR YACG"/>
    <property type="match status" value="1"/>
</dbReference>
<dbReference type="PANTHER" id="PTHR36150:SF1">
    <property type="entry name" value="DNA GYRASE INHIBITOR YACG"/>
    <property type="match status" value="1"/>
</dbReference>
<dbReference type="Pfam" id="PF03884">
    <property type="entry name" value="YacG"/>
    <property type="match status" value="1"/>
</dbReference>
<dbReference type="SUPFAM" id="SSF57716">
    <property type="entry name" value="Glucocorticoid receptor-like (DNA-binding domain)"/>
    <property type="match status" value="1"/>
</dbReference>
<protein>
    <recommendedName>
        <fullName evidence="1">DNA gyrase inhibitor YacG</fullName>
    </recommendedName>
</protein>
<gene>
    <name evidence="1" type="primary">yacG</name>
    <name type="ordered locus">NMA2158</name>
</gene>
<reference key="1">
    <citation type="journal article" date="2000" name="Nature">
        <title>Complete DNA sequence of a serogroup A strain of Neisseria meningitidis Z2491.</title>
        <authorList>
            <person name="Parkhill J."/>
            <person name="Achtman M."/>
            <person name="James K.D."/>
            <person name="Bentley S.D."/>
            <person name="Churcher C.M."/>
            <person name="Klee S.R."/>
            <person name="Morelli G."/>
            <person name="Basham D."/>
            <person name="Brown D."/>
            <person name="Chillingworth T."/>
            <person name="Davies R.M."/>
            <person name="Davis P."/>
            <person name="Devlin K."/>
            <person name="Feltwell T."/>
            <person name="Hamlin N."/>
            <person name="Holroyd S."/>
            <person name="Jagels K."/>
            <person name="Leather S."/>
            <person name="Moule S."/>
            <person name="Mungall K.L."/>
            <person name="Quail M.A."/>
            <person name="Rajandream M.A."/>
            <person name="Rutherford K.M."/>
            <person name="Simmonds M."/>
            <person name="Skelton J."/>
            <person name="Whitehead S."/>
            <person name="Spratt B.G."/>
            <person name="Barrell B.G."/>
        </authorList>
    </citation>
    <scope>NUCLEOTIDE SEQUENCE [LARGE SCALE GENOMIC DNA]</scope>
    <source>
        <strain>DSM 15465 / Z2491</strain>
    </source>
</reference>
<evidence type="ECO:0000255" key="1">
    <source>
        <dbReference type="HAMAP-Rule" id="MF_00649"/>
    </source>
</evidence>
<accession>Q9JSS3</accession>
<accession>A1ITY5</accession>
<keyword id="KW-0479">Metal-binding</keyword>
<keyword id="KW-0862">Zinc</keyword>
<proteinExistence type="inferred from homology"/>
<sequence>MAESRQTRLQVKCPTCQTAVVWEPENAFRPFCSQRCKLIDLGGWADGKYTVSGQTESLPEISEPDMAYR</sequence>